<keyword id="KW-0025">Alternative splicing</keyword>
<keyword id="KW-0256">Endoplasmic reticulum</keyword>
<keyword id="KW-0325">Glycoprotein</keyword>
<keyword id="KW-0333">Golgi apparatus</keyword>
<keyword id="KW-0378">Hydrolase</keyword>
<keyword id="KW-0443">Lipid metabolism</keyword>
<keyword id="KW-1185">Reference proteome</keyword>
<keyword id="KW-0964">Secreted</keyword>
<keyword id="KW-0732">Signal</keyword>
<keyword id="KW-0746">Sphingolipid metabolism</keyword>
<accession>Q304B9</accession>
<accession>F4IRY2</accession>
<accession>Q3EBK8</accession>
<accession>Q7XJQ9</accession>
<sequence length="757" mass="83264">MAVSLPLFQFILFLLLLLLSRTVYAYLIGVGSYDITGPAADVNMMGYANSDQIASGIHFRLRARAFIVAEPQGNRVVFVNLDACMASQIVTIKVLERLKARYGELYTEKNVAISGIHTHAGPGGYLQYVTYIVTSLGFVRQSFDVVVNGIEQSIVQAHESLRPGSAFVNKGDLLDAGVNRSPSSYLNNPAAERSKYKYDVDKEMTLVKFVDSQLGPTGSFNWFATHGTSMSRTNSLISGDNKGAAARFMEDWFENGQKNSVSSRNIPRRVSTIVSDFSRNRDRLLDIAATYKSSRGHSVDKSLDVKTRVRNGSKRKFVSAFCQSNCGDVSPNTLGTFCIDTGLPCDFNHSTCNGQNELCYGRGPGYPDEFESTRIIGEKQFKMAVELFNKATEKLQGKIGYQHAYLDFSNLDVTVPKAGGGSETVKTCPAAMGFGFAAGTTDGPGAFDFKQGDDQGNVFWRLVRNVLRTPGPEQVQCQKPKPILLDTGEMKEPYDWAPSILPIQILRIGQLVILSVPGEFTTMAGRRLRDAIKSFLISSDPKEFSNNMHVVIAGLTNTYSQYIATFEEYEVQRYEGASTLYGRHTLTAYIQEFKKLATALVNGLTLPRGPQPPDLLDKQISLLSPVVVDSTPLGVKFGDVKADVPPKSTFRRGQQVNATFWSGCPRNDLMTEGSFAVVETLREGGKWAPVYDDDDFSLKFKWSRPAKLSSESQATIEWRVPESAVAGVYRIRHYGASKSLFGSISSFSGSSSAFVVV</sequence>
<evidence type="ECO:0000250" key="1">
    <source>
        <dbReference type="UniProtKB" id="F4HQM3"/>
    </source>
</evidence>
<evidence type="ECO:0000250" key="2">
    <source>
        <dbReference type="UniProtKB" id="O06769"/>
    </source>
</evidence>
<evidence type="ECO:0000250" key="3">
    <source>
        <dbReference type="UniProtKB" id="Q0JL46"/>
    </source>
</evidence>
<evidence type="ECO:0000250" key="4">
    <source>
        <dbReference type="UniProtKB" id="Q9NR71"/>
    </source>
</evidence>
<evidence type="ECO:0000250" key="5">
    <source>
        <dbReference type="UniProtKB" id="Q9VA70"/>
    </source>
</evidence>
<evidence type="ECO:0000255" key="6"/>
<evidence type="ECO:0000255" key="7">
    <source>
        <dbReference type="PROSITE-ProRule" id="PRU00498"/>
    </source>
</evidence>
<evidence type="ECO:0000303" key="8">
    <source>
    </source>
</evidence>
<evidence type="ECO:0000305" key="9"/>
<evidence type="ECO:0000312" key="10">
    <source>
        <dbReference type="Araport" id="AT2G38010"/>
    </source>
</evidence>
<protein>
    <recommendedName>
        <fullName evidence="8">Neutral ceramidase 2</fullName>
        <shortName evidence="8">AtNCER2</shortName>
        <shortName evidence="8">N-CDase 2</shortName>
        <shortName evidence="8">NCDase 2</shortName>
        <ecNumber evidence="2">3.5.1.23</ecNumber>
    </recommendedName>
    <alternativeName>
        <fullName>Acylsphingosine deacylase 2</fullName>
    </alternativeName>
    <alternativeName>
        <fullName>N-acylsphingosine amidohydrolase 2</fullName>
    </alternativeName>
</protein>
<dbReference type="EC" id="3.5.1.23" evidence="2"/>
<dbReference type="EMBL" id="CP002685">
    <property type="protein sequence ID" value="AEC09477.1"/>
    <property type="molecule type" value="Genomic_DNA"/>
</dbReference>
<dbReference type="EMBL" id="CP002685">
    <property type="protein sequence ID" value="AEC09478.1"/>
    <property type="molecule type" value="Genomic_DNA"/>
</dbReference>
<dbReference type="PIR" id="H84799">
    <property type="entry name" value="H84799"/>
</dbReference>
<dbReference type="RefSeq" id="NP_181337.2">
    <molecule id="Q304B9-1"/>
    <property type="nucleotide sequence ID" value="NM_129358.3"/>
</dbReference>
<dbReference type="RefSeq" id="NP_973628.1">
    <molecule id="Q304B9-2"/>
    <property type="nucleotide sequence ID" value="NM_201899.2"/>
</dbReference>
<dbReference type="SMR" id="Q304B9"/>
<dbReference type="BioGRID" id="3723">
    <property type="interactions" value="1"/>
</dbReference>
<dbReference type="FunCoup" id="Q304B9">
    <property type="interactions" value="629"/>
</dbReference>
<dbReference type="STRING" id="3702.Q304B9"/>
<dbReference type="GlyCosmos" id="Q304B9">
    <property type="glycosylation" value="3 sites, No reported glycans"/>
</dbReference>
<dbReference type="GlyGen" id="Q304B9">
    <property type="glycosylation" value="3 sites"/>
</dbReference>
<dbReference type="iPTMnet" id="Q304B9"/>
<dbReference type="MetOSite" id="Q304B9"/>
<dbReference type="PaxDb" id="3702-AT2G38010.2"/>
<dbReference type="ProteomicsDB" id="251251">
    <molecule id="Q304B9-1"/>
</dbReference>
<dbReference type="EnsemblPlants" id="AT2G38010.1">
    <molecule id="Q304B9-1"/>
    <property type="protein sequence ID" value="AT2G38010.1"/>
    <property type="gene ID" value="AT2G38010"/>
</dbReference>
<dbReference type="EnsemblPlants" id="AT2G38010.2">
    <molecule id="Q304B9-2"/>
    <property type="protein sequence ID" value="AT2G38010.2"/>
    <property type="gene ID" value="AT2G38010"/>
</dbReference>
<dbReference type="GeneID" id="818379"/>
<dbReference type="Gramene" id="AT2G38010.1">
    <molecule id="Q304B9-1"/>
    <property type="protein sequence ID" value="AT2G38010.1"/>
    <property type="gene ID" value="AT2G38010"/>
</dbReference>
<dbReference type="Gramene" id="AT2G38010.2">
    <molecule id="Q304B9-2"/>
    <property type="protein sequence ID" value="AT2G38010.2"/>
    <property type="gene ID" value="AT2G38010"/>
</dbReference>
<dbReference type="KEGG" id="ath:AT2G38010"/>
<dbReference type="Araport" id="AT2G38010"/>
<dbReference type="TAIR" id="AT2G38010">
    <property type="gene designation" value="ATNCER2"/>
</dbReference>
<dbReference type="eggNOG" id="KOG2232">
    <property type="taxonomic scope" value="Eukaryota"/>
</dbReference>
<dbReference type="HOGENOM" id="CLU_011300_2_0_1"/>
<dbReference type="InParanoid" id="Q304B9"/>
<dbReference type="OrthoDB" id="191371at2759"/>
<dbReference type="PhylomeDB" id="Q304B9"/>
<dbReference type="BioCyc" id="ARA:AT2G38010-MONOMER"/>
<dbReference type="PRO" id="PR:Q304B9"/>
<dbReference type="Proteomes" id="UP000006548">
    <property type="component" value="Chromosome 2"/>
</dbReference>
<dbReference type="ExpressionAtlas" id="Q304B9">
    <property type="expression patterns" value="baseline and differential"/>
</dbReference>
<dbReference type="GO" id="GO:0005783">
    <property type="term" value="C:endoplasmic reticulum"/>
    <property type="evidence" value="ECO:0007669"/>
    <property type="project" value="UniProtKB-SubCell"/>
</dbReference>
<dbReference type="GO" id="GO:0005576">
    <property type="term" value="C:extracellular region"/>
    <property type="evidence" value="ECO:0007669"/>
    <property type="project" value="UniProtKB-SubCell"/>
</dbReference>
<dbReference type="GO" id="GO:0005794">
    <property type="term" value="C:Golgi apparatus"/>
    <property type="evidence" value="ECO:0007669"/>
    <property type="project" value="UniProtKB-SubCell"/>
</dbReference>
<dbReference type="GO" id="GO:0016020">
    <property type="term" value="C:membrane"/>
    <property type="evidence" value="ECO:0007669"/>
    <property type="project" value="GOC"/>
</dbReference>
<dbReference type="GO" id="GO:0009506">
    <property type="term" value="C:plasmodesma"/>
    <property type="evidence" value="ECO:0007005"/>
    <property type="project" value="TAIR"/>
</dbReference>
<dbReference type="GO" id="GO:0017040">
    <property type="term" value="F:N-acylsphingosine amidohydrolase activity"/>
    <property type="evidence" value="ECO:0007669"/>
    <property type="project" value="UniProtKB-EC"/>
</dbReference>
<dbReference type="GO" id="GO:0046514">
    <property type="term" value="P:ceramide catabolic process"/>
    <property type="evidence" value="ECO:0007669"/>
    <property type="project" value="InterPro"/>
</dbReference>
<dbReference type="FunFam" id="2.60.40.2300:FF:000002">
    <property type="entry name" value="Neutral/alkaline non-lysosomal ceramidase"/>
    <property type="match status" value="1"/>
</dbReference>
<dbReference type="Gene3D" id="2.60.40.2300">
    <property type="entry name" value="Neutral/alkaline non-lysosomal ceramidase, C-terminal domain"/>
    <property type="match status" value="1"/>
</dbReference>
<dbReference type="InterPro" id="IPR006823">
    <property type="entry name" value="Ceramidase_alk"/>
</dbReference>
<dbReference type="InterPro" id="IPR038445">
    <property type="entry name" value="NCDase_C_sf"/>
</dbReference>
<dbReference type="InterPro" id="IPR031331">
    <property type="entry name" value="NEUT/ALK_ceramidase_C"/>
</dbReference>
<dbReference type="InterPro" id="IPR031329">
    <property type="entry name" value="NEUT/ALK_ceramidase_N"/>
</dbReference>
<dbReference type="PANTHER" id="PTHR12670">
    <property type="entry name" value="CERAMIDASE"/>
    <property type="match status" value="1"/>
</dbReference>
<dbReference type="PANTHER" id="PTHR12670:SF17">
    <property type="entry name" value="NEUTRAL CERAMIDASE 2"/>
    <property type="match status" value="1"/>
</dbReference>
<dbReference type="Pfam" id="PF04734">
    <property type="entry name" value="Ceramidase_alk"/>
    <property type="match status" value="1"/>
</dbReference>
<dbReference type="Pfam" id="PF17048">
    <property type="entry name" value="Ceramidse_alk_C"/>
    <property type="match status" value="1"/>
</dbReference>
<proteinExistence type="inferred from homology"/>
<reference key="1">
    <citation type="journal article" date="1999" name="Nature">
        <title>Sequence and analysis of chromosome 2 of the plant Arabidopsis thaliana.</title>
        <authorList>
            <person name="Lin X."/>
            <person name="Kaul S."/>
            <person name="Rounsley S.D."/>
            <person name="Shea T.P."/>
            <person name="Benito M.-I."/>
            <person name="Town C.D."/>
            <person name="Fujii C.Y."/>
            <person name="Mason T.M."/>
            <person name="Bowman C.L."/>
            <person name="Barnstead M.E."/>
            <person name="Feldblyum T.V."/>
            <person name="Buell C.R."/>
            <person name="Ketchum K.A."/>
            <person name="Lee J.J."/>
            <person name="Ronning C.M."/>
            <person name="Koo H.L."/>
            <person name="Moffat K.S."/>
            <person name="Cronin L.A."/>
            <person name="Shen M."/>
            <person name="Pai G."/>
            <person name="Van Aken S."/>
            <person name="Umayam L."/>
            <person name="Tallon L.J."/>
            <person name="Gill J.E."/>
            <person name="Adams M.D."/>
            <person name="Carrera A.J."/>
            <person name="Creasy T.H."/>
            <person name="Goodman H.M."/>
            <person name="Somerville C.R."/>
            <person name="Copenhaver G.P."/>
            <person name="Preuss D."/>
            <person name="Nierman W.C."/>
            <person name="White O."/>
            <person name="Eisen J.A."/>
            <person name="Salzberg S.L."/>
            <person name="Fraser C.M."/>
            <person name="Venter J.C."/>
        </authorList>
    </citation>
    <scope>NUCLEOTIDE SEQUENCE [LARGE SCALE GENOMIC DNA]</scope>
    <source>
        <strain>cv. Columbia</strain>
    </source>
</reference>
<reference key="2">
    <citation type="journal article" date="2017" name="Plant J.">
        <title>Araport11: a complete reannotation of the Arabidopsis thaliana reference genome.</title>
        <authorList>
            <person name="Cheng C.Y."/>
            <person name="Krishnakumar V."/>
            <person name="Chan A.P."/>
            <person name="Thibaud-Nissen F."/>
            <person name="Schobel S."/>
            <person name="Town C.D."/>
        </authorList>
    </citation>
    <scope>GENOME REANNOTATION</scope>
    <source>
        <strain>cv. Columbia</strain>
    </source>
</reference>
<reference key="3">
    <citation type="journal article" date="2015" name="Front. Plant Sci.">
        <title>An Arabidopsis neutral ceramidase mutant ncer1 accumulates hydroxyceramides and is sensitive to oxidative stress.</title>
        <authorList>
            <person name="Li J."/>
            <person name="Bi F.-C."/>
            <person name="Yin J."/>
            <person name="Wu J.-X."/>
            <person name="Rong C."/>
            <person name="Wu J.-L."/>
            <person name="Yao N."/>
        </authorList>
    </citation>
    <scope>GENE FAMILY</scope>
    <scope>NOMENCLATURE</scope>
    <source>
        <strain>cv. Columbia</strain>
    </source>
</reference>
<feature type="signal peptide" evidence="6">
    <location>
        <begin position="1"/>
        <end position="25"/>
    </location>
</feature>
<feature type="chain" id="PRO_0000247110" description="Neutral ceramidase 2">
    <location>
        <begin position="26"/>
        <end position="757"/>
    </location>
</feature>
<feature type="active site" description="Nucleophile" evidence="4">
    <location>
        <position position="330"/>
    </location>
</feature>
<feature type="glycosylation site" description="N-linked (GlcNAc...) asparagine" evidence="7">
    <location>
        <position position="311"/>
    </location>
</feature>
<feature type="glycosylation site" description="N-linked (GlcNAc...) asparagine" evidence="7">
    <location>
        <position position="348"/>
    </location>
</feature>
<feature type="glycosylation site" description="N-linked (GlcNAc...) asparagine" evidence="7">
    <location>
        <position position="657"/>
    </location>
</feature>
<feature type="splice variant" id="VSP_058912" description="In isoform 2.">
    <original>D</original>
    <variation>ESYPFLELPNVAILYIAVAERLMWKVMVLFYFVSES</variation>
    <location>
        <position position="282"/>
    </location>
</feature>
<comment type="function">
    <text evidence="1">Hydrolyzes the sphingolipid ceramide into sphingosine and free fatty acid.</text>
</comment>
<comment type="catalytic activity">
    <reaction evidence="2">
        <text>an N-acylsphing-4-enine + H2O = sphing-4-enine + a fatty acid</text>
        <dbReference type="Rhea" id="RHEA:20856"/>
        <dbReference type="ChEBI" id="CHEBI:15377"/>
        <dbReference type="ChEBI" id="CHEBI:28868"/>
        <dbReference type="ChEBI" id="CHEBI:52639"/>
        <dbReference type="ChEBI" id="CHEBI:57756"/>
        <dbReference type="EC" id="3.5.1.23"/>
    </reaction>
</comment>
<comment type="subcellular location">
    <subcellularLocation>
        <location evidence="5">Secreted</location>
    </subcellularLocation>
    <subcellularLocation>
        <location evidence="1">Endoplasmic reticulum</location>
    </subcellularLocation>
    <subcellularLocation>
        <location evidence="3">Golgi apparatus</location>
    </subcellularLocation>
</comment>
<comment type="alternative products">
    <event type="alternative splicing"/>
    <isoform>
        <id>Q304B9-1</id>
        <name>1</name>
        <sequence type="displayed"/>
    </isoform>
    <isoform>
        <id>Q304B9-2</id>
        <name>2</name>
        <sequence type="described" ref="VSP_058912"/>
    </isoform>
    <text>A number of isoforms are produced. According to EST sequences.</text>
</comment>
<comment type="similarity">
    <text evidence="9">Belongs to the neutral ceramidase family.</text>
</comment>
<organism>
    <name type="scientific">Arabidopsis thaliana</name>
    <name type="common">Mouse-ear cress</name>
    <dbReference type="NCBI Taxonomy" id="3702"/>
    <lineage>
        <taxon>Eukaryota</taxon>
        <taxon>Viridiplantae</taxon>
        <taxon>Streptophyta</taxon>
        <taxon>Embryophyta</taxon>
        <taxon>Tracheophyta</taxon>
        <taxon>Spermatophyta</taxon>
        <taxon>Magnoliopsida</taxon>
        <taxon>eudicotyledons</taxon>
        <taxon>Gunneridae</taxon>
        <taxon>Pentapetalae</taxon>
        <taxon>rosids</taxon>
        <taxon>malvids</taxon>
        <taxon>Brassicales</taxon>
        <taxon>Brassicaceae</taxon>
        <taxon>Camelineae</taxon>
        <taxon>Arabidopsis</taxon>
    </lineage>
</organism>
<name>NCER2_ARATH</name>
<gene>
    <name evidence="8" type="primary">NCER2</name>
    <name evidence="10" type="ordered locus">At2g38010</name>
    <name evidence="9" type="ORF">T8P21.8</name>
</gene>